<gene>
    <name evidence="1" type="primary">rpsN</name>
    <name type="ordered locus">AZOSEA21700</name>
    <name type="ORF">ebC1</name>
</gene>
<dbReference type="EMBL" id="CR555306">
    <property type="protein sequence ID" value="CAI08295.1"/>
    <property type="molecule type" value="Genomic_DNA"/>
</dbReference>
<dbReference type="RefSeq" id="WP_011237985.1">
    <property type="nucleotide sequence ID" value="NC_006513.1"/>
</dbReference>
<dbReference type="SMR" id="Q5P319"/>
<dbReference type="STRING" id="76114.ebC1"/>
<dbReference type="KEGG" id="eba:ebC1"/>
<dbReference type="eggNOG" id="COG0199">
    <property type="taxonomic scope" value="Bacteria"/>
</dbReference>
<dbReference type="HOGENOM" id="CLU_139869_0_1_4"/>
<dbReference type="OrthoDB" id="9810484at2"/>
<dbReference type="Proteomes" id="UP000006552">
    <property type="component" value="Chromosome"/>
</dbReference>
<dbReference type="GO" id="GO:0005737">
    <property type="term" value="C:cytoplasm"/>
    <property type="evidence" value="ECO:0007669"/>
    <property type="project" value="UniProtKB-ARBA"/>
</dbReference>
<dbReference type="GO" id="GO:0015935">
    <property type="term" value="C:small ribosomal subunit"/>
    <property type="evidence" value="ECO:0007669"/>
    <property type="project" value="TreeGrafter"/>
</dbReference>
<dbReference type="GO" id="GO:0019843">
    <property type="term" value="F:rRNA binding"/>
    <property type="evidence" value="ECO:0007669"/>
    <property type="project" value="UniProtKB-UniRule"/>
</dbReference>
<dbReference type="GO" id="GO:0003735">
    <property type="term" value="F:structural constituent of ribosome"/>
    <property type="evidence" value="ECO:0007669"/>
    <property type="project" value="InterPro"/>
</dbReference>
<dbReference type="GO" id="GO:0006412">
    <property type="term" value="P:translation"/>
    <property type="evidence" value="ECO:0007669"/>
    <property type="project" value="UniProtKB-UniRule"/>
</dbReference>
<dbReference type="FunFam" id="1.10.287.1480:FF:000001">
    <property type="entry name" value="30S ribosomal protein S14"/>
    <property type="match status" value="1"/>
</dbReference>
<dbReference type="Gene3D" id="1.10.287.1480">
    <property type="match status" value="1"/>
</dbReference>
<dbReference type="HAMAP" id="MF_00537">
    <property type="entry name" value="Ribosomal_uS14_1"/>
    <property type="match status" value="1"/>
</dbReference>
<dbReference type="InterPro" id="IPR001209">
    <property type="entry name" value="Ribosomal_uS14"/>
</dbReference>
<dbReference type="InterPro" id="IPR023036">
    <property type="entry name" value="Ribosomal_uS14_bac/plastid"/>
</dbReference>
<dbReference type="InterPro" id="IPR018271">
    <property type="entry name" value="Ribosomal_uS14_CS"/>
</dbReference>
<dbReference type="NCBIfam" id="NF006477">
    <property type="entry name" value="PRK08881.1"/>
    <property type="match status" value="1"/>
</dbReference>
<dbReference type="PANTHER" id="PTHR19836">
    <property type="entry name" value="30S RIBOSOMAL PROTEIN S14"/>
    <property type="match status" value="1"/>
</dbReference>
<dbReference type="PANTHER" id="PTHR19836:SF19">
    <property type="entry name" value="SMALL RIBOSOMAL SUBUNIT PROTEIN US14M"/>
    <property type="match status" value="1"/>
</dbReference>
<dbReference type="Pfam" id="PF00253">
    <property type="entry name" value="Ribosomal_S14"/>
    <property type="match status" value="1"/>
</dbReference>
<dbReference type="SUPFAM" id="SSF57716">
    <property type="entry name" value="Glucocorticoid receptor-like (DNA-binding domain)"/>
    <property type="match status" value="1"/>
</dbReference>
<dbReference type="PROSITE" id="PS00527">
    <property type="entry name" value="RIBOSOMAL_S14"/>
    <property type="match status" value="1"/>
</dbReference>
<sequence>MAKLSLINREEKRRKTVEKFAAKRAALIAQINDFKLPEEERMVARLKLQQLPRNASPVRERNRCALTGRPRGVFRKFGLCRNKLRDLAFRGEVPGMTKASW</sequence>
<feature type="chain" id="PRO_1000128300" description="Small ribosomal subunit protein uS14">
    <location>
        <begin position="1"/>
        <end position="101"/>
    </location>
</feature>
<name>RS14_AROAE</name>
<accession>Q5P319</accession>
<organism>
    <name type="scientific">Aromatoleum aromaticum (strain DSM 19018 / LMG 30748 / EbN1)</name>
    <name type="common">Azoarcus sp. (strain EbN1)</name>
    <dbReference type="NCBI Taxonomy" id="76114"/>
    <lineage>
        <taxon>Bacteria</taxon>
        <taxon>Pseudomonadati</taxon>
        <taxon>Pseudomonadota</taxon>
        <taxon>Betaproteobacteria</taxon>
        <taxon>Rhodocyclales</taxon>
        <taxon>Rhodocyclaceae</taxon>
        <taxon>Aromatoleum</taxon>
    </lineage>
</organism>
<reference key="1">
    <citation type="journal article" date="2005" name="Arch. Microbiol.">
        <title>The genome sequence of an anaerobic aromatic-degrading denitrifying bacterium, strain EbN1.</title>
        <authorList>
            <person name="Rabus R."/>
            <person name="Kube M."/>
            <person name="Heider J."/>
            <person name="Beck A."/>
            <person name="Heitmann K."/>
            <person name="Widdel F."/>
            <person name="Reinhardt R."/>
        </authorList>
    </citation>
    <scope>NUCLEOTIDE SEQUENCE [LARGE SCALE GENOMIC DNA]</scope>
    <source>
        <strain>DSM 19018 / LMG 30748 / EbN1</strain>
    </source>
</reference>
<evidence type="ECO:0000255" key="1">
    <source>
        <dbReference type="HAMAP-Rule" id="MF_00537"/>
    </source>
</evidence>
<evidence type="ECO:0000305" key="2"/>
<keyword id="KW-1185">Reference proteome</keyword>
<keyword id="KW-0687">Ribonucleoprotein</keyword>
<keyword id="KW-0689">Ribosomal protein</keyword>
<keyword id="KW-0694">RNA-binding</keyword>
<keyword id="KW-0699">rRNA-binding</keyword>
<comment type="function">
    <text evidence="1">Binds 16S rRNA, required for the assembly of 30S particles and may also be responsible for determining the conformation of the 16S rRNA at the A site.</text>
</comment>
<comment type="subunit">
    <text evidence="1">Part of the 30S ribosomal subunit. Contacts proteins S3 and S10.</text>
</comment>
<comment type="similarity">
    <text evidence="1">Belongs to the universal ribosomal protein uS14 family.</text>
</comment>
<proteinExistence type="inferred from homology"/>
<protein>
    <recommendedName>
        <fullName evidence="1">Small ribosomal subunit protein uS14</fullName>
    </recommendedName>
    <alternativeName>
        <fullName evidence="2">30S ribosomal protein S14</fullName>
    </alternativeName>
</protein>